<sequence length="400" mass="45098">MDSDAWEIIHIPEKPSLSPDHQPTVKVYASLIKPRFANTIVRHLCKIAPLEDLRHVKRVKKKILPDCGETQLTVILCLAPEHNDQLSDMPPDVQRLVDPYELSPFITQVCKYAAVSKEEWEEQSKIWPTSFHPPTYNIDGIGGFSEEETQSICKFMRVVIDMAVSGHTPLVNAAVIVDPSVRRIIASETDQVYASSAPRDMTSAETRPFEETGEICLNDTLEKQNGSLSALSCLNPWQWSLQPHDTENCSQWHPLRHASMVAIESSSARDRNLFPNPSKIFDQDHVPPSNTDSPAKKQKTSSQSPDVQNDSREETVRDPSMERPYLCTGYDIFLLLEPCTMCAMALVHQRIKRIFYAFPNTTAGGLGSVHRLQGEKSLNHHYAVFRVLLPDDALRQMTTV</sequence>
<proteinExistence type="evidence at protein level"/>
<reference key="1">
    <citation type="journal article" date="1998" name="DNA Res.">
        <title>Structural analysis of Arabidopsis thaliana chromosome 5. VIII. Sequence features of the regions of 1,081,958 bp covered by seventeen physically assigned P1 and TAC clones.</title>
        <authorList>
            <person name="Asamizu E."/>
            <person name="Sato S."/>
            <person name="Kaneko T."/>
            <person name="Nakamura Y."/>
            <person name="Kotani H."/>
            <person name="Miyajima N."/>
            <person name="Tabata S."/>
        </authorList>
    </citation>
    <scope>NUCLEOTIDE SEQUENCE [LARGE SCALE GENOMIC DNA]</scope>
    <source>
        <strain>cv. Columbia</strain>
    </source>
</reference>
<reference key="2">
    <citation type="journal article" date="2017" name="Plant J.">
        <title>Araport11: a complete reannotation of the Arabidopsis thaliana reference genome.</title>
        <authorList>
            <person name="Cheng C.Y."/>
            <person name="Krishnakumar V."/>
            <person name="Chan A.P."/>
            <person name="Thibaud-Nissen F."/>
            <person name="Schobel S."/>
            <person name="Town C.D."/>
        </authorList>
    </citation>
    <scope>GENOME REANNOTATION</scope>
    <source>
        <strain>cv. Columbia</strain>
    </source>
</reference>
<reference key="3">
    <citation type="submission" date="2004-11" db="EMBL/GenBank/DDBJ databases">
        <title>Arabidopsis ORF clones.</title>
        <authorList>
            <person name="Shinn P."/>
            <person name="Chen H."/>
            <person name="Cheuk R.F."/>
            <person name="Kim C.J."/>
            <person name="Ecker J.R."/>
        </authorList>
    </citation>
    <scope>NUCLEOTIDE SEQUENCE [LARGE SCALE MRNA]</scope>
    <source>
        <strain>cv. Columbia</strain>
    </source>
</reference>
<reference key="4">
    <citation type="submission" date="2006-07" db="EMBL/GenBank/DDBJ databases">
        <title>Large-scale analysis of RIKEN Arabidopsis full-length (RAFL) cDNAs.</title>
        <authorList>
            <person name="Totoki Y."/>
            <person name="Seki M."/>
            <person name="Ishida J."/>
            <person name="Nakajima M."/>
            <person name="Enju A."/>
            <person name="Kamiya A."/>
            <person name="Narusaka M."/>
            <person name="Shin-i T."/>
            <person name="Nakagawa M."/>
            <person name="Sakamoto N."/>
            <person name="Oishi K."/>
            <person name="Kohara Y."/>
            <person name="Kobayashi M."/>
            <person name="Toyoda A."/>
            <person name="Sakaki Y."/>
            <person name="Sakurai T."/>
            <person name="Iida K."/>
            <person name="Akiyama K."/>
            <person name="Satou M."/>
            <person name="Toyoda T."/>
            <person name="Konagaya A."/>
            <person name="Carninci P."/>
            <person name="Kawai J."/>
            <person name="Hayashizaki Y."/>
            <person name="Shinozaki K."/>
        </authorList>
    </citation>
    <scope>NUCLEOTIDE SEQUENCE [LARGE SCALE MRNA]</scope>
    <source>
        <strain>cv. Columbia</strain>
    </source>
</reference>
<reference key="5">
    <citation type="journal article" date="2014" name="Plant Physiol.">
        <title>Identification of enzymes for adenosine-to-inosine editing and discovery of cytidine-to-uridine editing in nucleus-encoded transfer RNAs of Arabidopsis.</title>
        <authorList>
            <person name="Zhou W."/>
            <person name="Karcher D."/>
            <person name="Bock R."/>
        </authorList>
    </citation>
    <scope>FUNCTION</scope>
    <scope>CATALYTIC ACTIVITY</scope>
    <scope>INTERACTION WITH TAD2</scope>
    <scope>SUBCELLULAR LOCATION</scope>
    <scope>DISRUPTION PHENOTYPE</scope>
</reference>
<accession>F4KH86</accession>
<accession>Q0WRI1</accession>
<accession>Q5XF54</accession>
<accession>Q9FIR8</accession>
<evidence type="ECO:0000255" key="1">
    <source>
        <dbReference type="PROSITE-ProRule" id="PRU01083"/>
    </source>
</evidence>
<evidence type="ECO:0000256" key="2">
    <source>
        <dbReference type="SAM" id="MobiDB-lite"/>
    </source>
</evidence>
<evidence type="ECO:0000269" key="3">
    <source>
    </source>
</evidence>
<evidence type="ECO:0000303" key="4">
    <source>
    </source>
</evidence>
<evidence type="ECO:0000305" key="5"/>
<evidence type="ECO:0000312" key="6">
    <source>
        <dbReference type="Araport" id="AT5G24670"/>
    </source>
</evidence>
<evidence type="ECO:0000312" key="7">
    <source>
        <dbReference type="EMBL" id="BAB09649.1"/>
    </source>
</evidence>
<organism>
    <name type="scientific">Arabidopsis thaliana</name>
    <name type="common">Mouse-ear cress</name>
    <dbReference type="NCBI Taxonomy" id="3702"/>
    <lineage>
        <taxon>Eukaryota</taxon>
        <taxon>Viridiplantae</taxon>
        <taxon>Streptophyta</taxon>
        <taxon>Embryophyta</taxon>
        <taxon>Tracheophyta</taxon>
        <taxon>Spermatophyta</taxon>
        <taxon>Magnoliopsida</taxon>
        <taxon>eudicotyledons</taxon>
        <taxon>Gunneridae</taxon>
        <taxon>Pentapetalae</taxon>
        <taxon>rosids</taxon>
        <taxon>malvids</taxon>
        <taxon>Brassicales</taxon>
        <taxon>Brassicaceae</taxon>
        <taxon>Camelineae</taxon>
        <taxon>Arabidopsis</taxon>
    </lineage>
</organism>
<protein>
    <recommendedName>
        <fullName evidence="4">tRNA-specific adenosine deaminase TAD3</fullName>
        <shortName evidence="4">AtTAD3</shortName>
        <ecNumber evidence="3">3.5.4.33</ecNumber>
    </recommendedName>
    <alternativeName>
        <fullName evidence="5">Protein EMBRYO DEFECTIVE 2820</fullName>
    </alternativeName>
    <alternativeName>
        <fullName evidence="5">tRNA-specific adenosine-34 deaminase TAD3</fullName>
    </alternativeName>
</protein>
<dbReference type="EC" id="3.5.4.33" evidence="3"/>
<dbReference type="EMBL" id="AB016881">
    <property type="protein sequence ID" value="BAB09649.1"/>
    <property type="status" value="ALT_SEQ"/>
    <property type="molecule type" value="Genomic_DNA"/>
</dbReference>
<dbReference type="EMBL" id="CP002688">
    <property type="protein sequence ID" value="AED93347.1"/>
    <property type="molecule type" value="Genomic_DNA"/>
</dbReference>
<dbReference type="EMBL" id="CP002688">
    <property type="protein sequence ID" value="ANM69030.1"/>
    <property type="molecule type" value="Genomic_DNA"/>
</dbReference>
<dbReference type="EMBL" id="CP002688">
    <property type="protein sequence ID" value="ANM69032.1"/>
    <property type="molecule type" value="Genomic_DNA"/>
</dbReference>
<dbReference type="EMBL" id="BT015762">
    <property type="protein sequence ID" value="AAU90052.1"/>
    <property type="molecule type" value="mRNA"/>
</dbReference>
<dbReference type="EMBL" id="BT020197">
    <property type="protein sequence ID" value="AAV59263.1"/>
    <property type="molecule type" value="mRNA"/>
</dbReference>
<dbReference type="EMBL" id="AK228326">
    <property type="protein sequence ID" value="BAF00268.1"/>
    <property type="status" value="ALT_FRAME"/>
    <property type="molecule type" value="mRNA"/>
</dbReference>
<dbReference type="RefSeq" id="NP_001318639.1">
    <property type="nucleotide sequence ID" value="NM_001343891.1"/>
</dbReference>
<dbReference type="RefSeq" id="NP_001330739.1">
    <property type="nucleotide sequence ID" value="NM_001343893.1"/>
</dbReference>
<dbReference type="RefSeq" id="NP_197855.3">
    <property type="nucleotide sequence ID" value="NM_122376.4"/>
</dbReference>
<dbReference type="SMR" id="F4KH86"/>
<dbReference type="FunCoup" id="F4KH86">
    <property type="interactions" value="1305"/>
</dbReference>
<dbReference type="STRING" id="3702.F4KH86"/>
<dbReference type="iPTMnet" id="F4KH86"/>
<dbReference type="PaxDb" id="3702-AT5G24670.2"/>
<dbReference type="EnsemblPlants" id="AT5G24670.1">
    <property type="protein sequence ID" value="AT5G24670.1"/>
    <property type="gene ID" value="AT5G24670"/>
</dbReference>
<dbReference type="EnsemblPlants" id="AT5G24670.3">
    <property type="protein sequence ID" value="AT5G24670.3"/>
    <property type="gene ID" value="AT5G24670"/>
</dbReference>
<dbReference type="EnsemblPlants" id="AT5G24670.4">
    <property type="protein sequence ID" value="AT5G24670.4"/>
    <property type="gene ID" value="AT5G24670"/>
</dbReference>
<dbReference type="GeneID" id="832539"/>
<dbReference type="Gramene" id="AT5G24670.1">
    <property type="protein sequence ID" value="AT5G24670.1"/>
    <property type="gene ID" value="AT5G24670"/>
</dbReference>
<dbReference type="Gramene" id="AT5G24670.3">
    <property type="protein sequence ID" value="AT5G24670.3"/>
    <property type="gene ID" value="AT5G24670"/>
</dbReference>
<dbReference type="Gramene" id="AT5G24670.4">
    <property type="protein sequence ID" value="AT5G24670.4"/>
    <property type="gene ID" value="AT5G24670"/>
</dbReference>
<dbReference type="KEGG" id="ath:AT5G24670"/>
<dbReference type="Araport" id="AT5G24670"/>
<dbReference type="TAIR" id="AT5G24670">
    <property type="gene designation" value="EMB2820"/>
</dbReference>
<dbReference type="InParanoid" id="F4KH86"/>
<dbReference type="OMA" id="QHWPTSF"/>
<dbReference type="PRO" id="PR:F4KH86"/>
<dbReference type="Proteomes" id="UP000006548">
    <property type="component" value="Chromosome 5"/>
</dbReference>
<dbReference type="ExpressionAtlas" id="F4KH86">
    <property type="expression patterns" value="baseline and differential"/>
</dbReference>
<dbReference type="GO" id="GO:0005737">
    <property type="term" value="C:cytoplasm"/>
    <property type="evidence" value="ECO:0000314"/>
    <property type="project" value="UniProtKB"/>
</dbReference>
<dbReference type="GO" id="GO:0005634">
    <property type="term" value="C:nucleus"/>
    <property type="evidence" value="ECO:0000314"/>
    <property type="project" value="UniProtKB"/>
</dbReference>
<dbReference type="GO" id="GO:0046872">
    <property type="term" value="F:metal ion binding"/>
    <property type="evidence" value="ECO:0007669"/>
    <property type="project" value="UniProtKB-KW"/>
</dbReference>
<dbReference type="GO" id="GO:0008251">
    <property type="term" value="F:tRNA-specific adenosine deaminase activity"/>
    <property type="evidence" value="ECO:0000315"/>
    <property type="project" value="UniProtKB"/>
</dbReference>
<dbReference type="GO" id="GO:0052717">
    <property type="term" value="F:tRNA-specific adenosine-34 deaminase activity"/>
    <property type="evidence" value="ECO:0007669"/>
    <property type="project" value="UniProtKB-EC"/>
</dbReference>
<dbReference type="GO" id="GO:0006400">
    <property type="term" value="P:tRNA modification"/>
    <property type="evidence" value="ECO:0000315"/>
    <property type="project" value="UniProtKB"/>
</dbReference>
<dbReference type="Gene3D" id="3.40.140.10">
    <property type="entry name" value="Cytidine Deaminase, domain 2"/>
    <property type="match status" value="1"/>
</dbReference>
<dbReference type="InterPro" id="IPR016193">
    <property type="entry name" value="Cytidine_deaminase-like"/>
</dbReference>
<dbReference type="PANTHER" id="PTHR11079">
    <property type="entry name" value="CYTOSINE DEAMINASE FAMILY MEMBER"/>
    <property type="match status" value="1"/>
</dbReference>
<dbReference type="PANTHER" id="PTHR11079:SF156">
    <property type="entry name" value="INACTIVE TRNA-SPECIFIC ADENOSINE DEAMINASE-LIKE PROTEIN 3-RELATED"/>
    <property type="match status" value="1"/>
</dbReference>
<dbReference type="SUPFAM" id="SSF53927">
    <property type="entry name" value="Cytidine deaminase-like"/>
    <property type="match status" value="1"/>
</dbReference>
<keyword id="KW-0963">Cytoplasm</keyword>
<keyword id="KW-0378">Hydrolase</keyword>
<keyword id="KW-0479">Metal-binding</keyword>
<keyword id="KW-0539">Nucleus</keyword>
<keyword id="KW-1185">Reference proteome</keyword>
<keyword id="KW-0819">tRNA processing</keyword>
<keyword id="KW-0862">Zinc</keyword>
<name>TAD3_ARATH</name>
<comment type="function">
    <text evidence="3">Involved in RNA editing. Catalyzes the specific deamination of adenosine-34 in several cytosolic tRNA species. Generates inosine at the wobble position of the anticodon loop.</text>
</comment>
<comment type="catalytic activity">
    <reaction evidence="3">
        <text>adenosine(34) in tRNA + H2O + H(+) = inosine(34) in tRNA + NH4(+)</text>
        <dbReference type="Rhea" id="RHEA:43168"/>
        <dbReference type="Rhea" id="RHEA-COMP:10373"/>
        <dbReference type="Rhea" id="RHEA-COMP:10374"/>
        <dbReference type="ChEBI" id="CHEBI:15377"/>
        <dbReference type="ChEBI" id="CHEBI:15378"/>
        <dbReference type="ChEBI" id="CHEBI:28938"/>
        <dbReference type="ChEBI" id="CHEBI:74411"/>
        <dbReference type="ChEBI" id="CHEBI:82852"/>
        <dbReference type="EC" id="3.5.4.33"/>
    </reaction>
</comment>
<comment type="subunit">
    <text evidence="3">Interacts with TAD2.</text>
</comment>
<comment type="subcellular location">
    <subcellularLocation>
        <location evidence="3">Nucleus</location>
    </subcellularLocation>
    <subcellularLocation>
        <location evidence="3">Cytoplasm</location>
    </subcellularLocation>
    <text evidence="3">Localizes predominantly to the nucleus.</text>
</comment>
<comment type="disruption phenotype">
    <text evidence="3">Embryonic lethality due to embryo development arrest at the globular stage.</text>
</comment>
<comment type="similarity">
    <text evidence="5">Belongs to the cytidine and deoxycytidylate deaminase family. ADAT3 subfamily.</text>
</comment>
<comment type="sequence caution" evidence="5">
    <conflict type="erroneous gene model prediction">
        <sequence resource="EMBL-CDS" id="BAB09649"/>
    </conflict>
</comment>
<comment type="sequence caution" evidence="5">
    <conflict type="frameshift">
        <sequence resource="EMBL-CDS" id="BAF00268"/>
    </conflict>
</comment>
<gene>
    <name evidence="4" type="primary">TAD3</name>
    <name evidence="5" type="synonym">EMB2820</name>
    <name evidence="6" type="ordered locus">At5g24670</name>
    <name evidence="7" type="ORF">MXC17.5</name>
</gene>
<feature type="chain" id="PRO_0000443860" description="tRNA-specific adenosine deaminase TAD3">
    <location>
        <begin position="1"/>
        <end position="400"/>
    </location>
</feature>
<feature type="domain" description="CMP/dCMP-type deaminase" evidence="1">
    <location>
        <begin position="250"/>
        <end position="385"/>
    </location>
</feature>
<feature type="region of interest" description="Disordered" evidence="2">
    <location>
        <begin position="273"/>
        <end position="320"/>
    </location>
</feature>
<feature type="compositionally biased region" description="Basic and acidic residues" evidence="2">
    <location>
        <begin position="309"/>
        <end position="320"/>
    </location>
</feature>
<feature type="binding site" evidence="1">
    <location>
        <position position="257"/>
    </location>
    <ligand>
        <name>Zn(2+)</name>
        <dbReference type="ChEBI" id="CHEBI:29105"/>
        <note>catalytic</note>
    </ligand>
</feature>
<feature type="binding site" evidence="1">
    <location>
        <position position="339"/>
    </location>
    <ligand>
        <name>Zn(2+)</name>
        <dbReference type="ChEBI" id="CHEBI:29105"/>
        <note>catalytic</note>
    </ligand>
</feature>
<feature type="binding site" evidence="1">
    <location>
        <position position="342"/>
    </location>
    <ligand>
        <name>Zn(2+)</name>
        <dbReference type="ChEBI" id="CHEBI:29105"/>
        <note>catalytic</note>
    </ligand>
</feature>
<feature type="sequence conflict" description="In Ref. 3; AAU90052/AAV59263." evidence="5" ref="3">
    <original>I</original>
    <variation>M</variation>
    <location>
        <position position="138"/>
    </location>
</feature>